<feature type="chain" id="PRO_0000431439" description="Origin of replication complex subunit 6">
    <location>
        <begin position="1"/>
        <end position="296"/>
    </location>
</feature>
<feature type="region of interest" description="Disordered" evidence="3">
    <location>
        <begin position="212"/>
        <end position="296"/>
    </location>
</feature>
<feature type="compositionally biased region" description="Acidic residues" evidence="3">
    <location>
        <begin position="220"/>
        <end position="236"/>
    </location>
</feature>
<feature type="compositionally biased region" description="Polar residues" evidence="3">
    <location>
        <begin position="254"/>
        <end position="264"/>
    </location>
</feature>
<evidence type="ECO:0000250" key="1">
    <source>
        <dbReference type="UniProtKB" id="Q9Y5N6"/>
    </source>
</evidence>
<evidence type="ECO:0000250" key="2">
    <source>
        <dbReference type="UniProtKB" id="Q9ZVH3"/>
    </source>
</evidence>
<evidence type="ECO:0000256" key="3">
    <source>
        <dbReference type="SAM" id="MobiDB-lite"/>
    </source>
</evidence>
<evidence type="ECO:0000305" key="4"/>
<evidence type="ECO:0000312" key="5">
    <source>
        <dbReference type="EMBL" id="EAZ04795.1"/>
    </source>
</evidence>
<proteinExistence type="inferred from homology"/>
<protein>
    <recommendedName>
        <fullName evidence="4">Origin of replication complex subunit 6</fullName>
        <shortName evidence="4">OsORC6</shortName>
    </recommendedName>
</protein>
<sequence>MDMSSIASRLGLSGSRPVVGKAAELRRLCDVTFDSSVLGIGEVCKAIICLEIAASKFQVIFDRAEAVRMSGMSEKAYIRSFNALQNGLGVKTTLDVRELGIQFGCVRLIPFVQKGLSLYKERFLAALPPSRRASTDFGRPVFTAASFYLCAKRHKLKVDKLKLIDLCGTSSSEFTTVSTSMADLCFDVFGIAKEKKDAKSIKGSRELLDVLPSKRKHDDDSDSSGESSGDDQDELDLPTYKRHKKMEKEAYNDWKSSVLSSNKQTKPDPAKPRKQAQLNFKKKPSDMALEVSSAAN</sequence>
<accession>A2YNY4</accession>
<name>ORC6_ORYSI</name>
<comment type="function">
    <text evidence="1">Component of the origin recognition complex (ORC) that binds origins of replication. DNA-binding is ATP-dependent. The specific DNA sequences that define origins of replication have not been identified yet. ORC is required to assemble the pre-replication complex necessary to initiate DNA replication.</text>
</comment>
<comment type="subunit">
    <text evidence="2">Component of the origin recognition complex (ORC) composed of at least ORC1, ORC2, ORC3, ORC4, ORC5 and ORC6. ORC is regulated in a cell-cycle and development dependent manner. It is sequentially assembled at the exit from anaphase of mitosis and disassembled as cells enter S phase.</text>
</comment>
<comment type="subcellular location">
    <subcellularLocation>
        <location evidence="1">Nucleus</location>
    </subcellularLocation>
</comment>
<comment type="similarity">
    <text evidence="4">Belongs to the ORC6 family.</text>
</comment>
<keyword id="KW-0235">DNA replication</keyword>
<keyword id="KW-0238">DNA-binding</keyword>
<keyword id="KW-0539">Nucleus</keyword>
<keyword id="KW-1185">Reference proteome</keyword>
<dbReference type="EMBL" id="CM000132">
    <property type="protein sequence ID" value="EAZ04795.1"/>
    <property type="molecule type" value="Genomic_DNA"/>
</dbReference>
<dbReference type="SMR" id="A2YNY4"/>
<dbReference type="STRING" id="39946.A2YNY4"/>
<dbReference type="EnsemblPlants" id="BGIOSGA023868-TA">
    <property type="protein sequence ID" value="BGIOSGA023868-PA"/>
    <property type="gene ID" value="BGIOSGA023868"/>
</dbReference>
<dbReference type="Gramene" id="BGIOSGA023868-TA">
    <property type="protein sequence ID" value="BGIOSGA023868-PA"/>
    <property type="gene ID" value="BGIOSGA023868"/>
</dbReference>
<dbReference type="HOGENOM" id="CLU_080569_0_0_1"/>
<dbReference type="OMA" id="RKSHYLN"/>
<dbReference type="Proteomes" id="UP000007015">
    <property type="component" value="Chromosome 7"/>
</dbReference>
<dbReference type="GO" id="GO:0005664">
    <property type="term" value="C:nuclear origin of replication recognition complex"/>
    <property type="evidence" value="ECO:0007669"/>
    <property type="project" value="InterPro"/>
</dbReference>
<dbReference type="GO" id="GO:0003677">
    <property type="term" value="F:DNA binding"/>
    <property type="evidence" value="ECO:0007669"/>
    <property type="project" value="UniProtKB-KW"/>
</dbReference>
<dbReference type="GO" id="GO:0006270">
    <property type="term" value="P:DNA replication initiation"/>
    <property type="evidence" value="ECO:0007669"/>
    <property type="project" value="TreeGrafter"/>
</dbReference>
<dbReference type="GO" id="GO:0009555">
    <property type="term" value="P:pollen development"/>
    <property type="evidence" value="ECO:0007669"/>
    <property type="project" value="EnsemblPlants"/>
</dbReference>
<dbReference type="CDD" id="cd11583">
    <property type="entry name" value="Orc6_mid"/>
    <property type="match status" value="1"/>
</dbReference>
<dbReference type="FunFam" id="1.10.472.10:FF:000062">
    <property type="entry name" value="Origin recognition complex subunit 6"/>
    <property type="match status" value="1"/>
</dbReference>
<dbReference type="Gene3D" id="1.10.472.10">
    <property type="entry name" value="Cyclin-like"/>
    <property type="match status" value="1"/>
</dbReference>
<dbReference type="InterPro" id="IPR054113">
    <property type="entry name" value="ORC6_cyclin-like_2nd"/>
</dbReference>
<dbReference type="InterPro" id="IPR008721">
    <property type="entry name" value="ORC6_cyclin_first"/>
</dbReference>
<dbReference type="InterPro" id="IPR020529">
    <property type="entry name" value="ORC6_met/pln"/>
</dbReference>
<dbReference type="PANTHER" id="PTHR13394">
    <property type="entry name" value="ORIGIN RECOGNITION COMPLEX SUBUNIT 6"/>
    <property type="match status" value="1"/>
</dbReference>
<dbReference type="PANTHER" id="PTHR13394:SF0">
    <property type="entry name" value="ORIGIN RECOGNITION COMPLEX SUBUNIT 6"/>
    <property type="match status" value="1"/>
</dbReference>
<dbReference type="Pfam" id="PF05460">
    <property type="entry name" value="ORC6"/>
    <property type="match status" value="1"/>
</dbReference>
<dbReference type="Pfam" id="PF21913">
    <property type="entry name" value="ORC6_2nd"/>
    <property type="match status" value="1"/>
</dbReference>
<gene>
    <name evidence="5" type="ORF">OsI_26966</name>
</gene>
<reference key="1">
    <citation type="journal article" date="2005" name="PLoS Biol.">
        <title>The genomes of Oryza sativa: a history of duplications.</title>
        <authorList>
            <person name="Yu J."/>
            <person name="Wang J."/>
            <person name="Lin W."/>
            <person name="Li S."/>
            <person name="Li H."/>
            <person name="Zhou J."/>
            <person name="Ni P."/>
            <person name="Dong W."/>
            <person name="Hu S."/>
            <person name="Zeng C."/>
            <person name="Zhang J."/>
            <person name="Zhang Y."/>
            <person name="Li R."/>
            <person name="Xu Z."/>
            <person name="Li S."/>
            <person name="Li X."/>
            <person name="Zheng H."/>
            <person name="Cong L."/>
            <person name="Lin L."/>
            <person name="Yin J."/>
            <person name="Geng J."/>
            <person name="Li G."/>
            <person name="Shi J."/>
            <person name="Liu J."/>
            <person name="Lv H."/>
            <person name="Li J."/>
            <person name="Wang J."/>
            <person name="Deng Y."/>
            <person name="Ran L."/>
            <person name="Shi X."/>
            <person name="Wang X."/>
            <person name="Wu Q."/>
            <person name="Li C."/>
            <person name="Ren X."/>
            <person name="Wang J."/>
            <person name="Wang X."/>
            <person name="Li D."/>
            <person name="Liu D."/>
            <person name="Zhang X."/>
            <person name="Ji Z."/>
            <person name="Zhao W."/>
            <person name="Sun Y."/>
            <person name="Zhang Z."/>
            <person name="Bao J."/>
            <person name="Han Y."/>
            <person name="Dong L."/>
            <person name="Ji J."/>
            <person name="Chen P."/>
            <person name="Wu S."/>
            <person name="Liu J."/>
            <person name="Xiao Y."/>
            <person name="Bu D."/>
            <person name="Tan J."/>
            <person name="Yang L."/>
            <person name="Ye C."/>
            <person name="Zhang J."/>
            <person name="Xu J."/>
            <person name="Zhou Y."/>
            <person name="Yu Y."/>
            <person name="Zhang B."/>
            <person name="Zhuang S."/>
            <person name="Wei H."/>
            <person name="Liu B."/>
            <person name="Lei M."/>
            <person name="Yu H."/>
            <person name="Li Y."/>
            <person name="Xu H."/>
            <person name="Wei S."/>
            <person name="He X."/>
            <person name="Fang L."/>
            <person name="Zhang Z."/>
            <person name="Zhang Y."/>
            <person name="Huang X."/>
            <person name="Su Z."/>
            <person name="Tong W."/>
            <person name="Li J."/>
            <person name="Tong Z."/>
            <person name="Li S."/>
            <person name="Ye J."/>
            <person name="Wang L."/>
            <person name="Fang L."/>
            <person name="Lei T."/>
            <person name="Chen C.-S."/>
            <person name="Chen H.-C."/>
            <person name="Xu Z."/>
            <person name="Li H."/>
            <person name="Huang H."/>
            <person name="Zhang F."/>
            <person name="Xu H."/>
            <person name="Li N."/>
            <person name="Zhao C."/>
            <person name="Li S."/>
            <person name="Dong L."/>
            <person name="Huang Y."/>
            <person name="Li L."/>
            <person name="Xi Y."/>
            <person name="Qi Q."/>
            <person name="Li W."/>
            <person name="Zhang B."/>
            <person name="Hu W."/>
            <person name="Zhang Y."/>
            <person name="Tian X."/>
            <person name="Jiao Y."/>
            <person name="Liang X."/>
            <person name="Jin J."/>
            <person name="Gao L."/>
            <person name="Zheng W."/>
            <person name="Hao B."/>
            <person name="Liu S.-M."/>
            <person name="Wang W."/>
            <person name="Yuan L."/>
            <person name="Cao M."/>
            <person name="McDermott J."/>
            <person name="Samudrala R."/>
            <person name="Wang J."/>
            <person name="Wong G.K.-S."/>
            <person name="Yang H."/>
        </authorList>
    </citation>
    <scope>NUCLEOTIDE SEQUENCE [LARGE SCALE GENOMIC DNA]</scope>
    <source>
        <strain>cv. 93-11</strain>
    </source>
</reference>
<organism evidence="5">
    <name type="scientific">Oryza sativa subsp. indica</name>
    <name type="common">Rice</name>
    <dbReference type="NCBI Taxonomy" id="39946"/>
    <lineage>
        <taxon>Eukaryota</taxon>
        <taxon>Viridiplantae</taxon>
        <taxon>Streptophyta</taxon>
        <taxon>Embryophyta</taxon>
        <taxon>Tracheophyta</taxon>
        <taxon>Spermatophyta</taxon>
        <taxon>Magnoliopsida</taxon>
        <taxon>Liliopsida</taxon>
        <taxon>Poales</taxon>
        <taxon>Poaceae</taxon>
        <taxon>BOP clade</taxon>
        <taxon>Oryzoideae</taxon>
        <taxon>Oryzeae</taxon>
        <taxon>Oryzinae</taxon>
        <taxon>Oryza</taxon>
        <taxon>Oryza sativa</taxon>
    </lineage>
</organism>